<evidence type="ECO:0000255" key="1">
    <source>
        <dbReference type="HAMAP-Rule" id="MF_04062"/>
    </source>
</evidence>
<comment type="function">
    <text evidence="1">Plays an essential role in transcription initiation and cap-stealing mechanism, in which cellular capped pre-mRNAs are used to generate primers for viral transcription. Recognizes and binds the 7-methylguanosine-containing cap of the target pre-RNA which is subsequently cleaved after 10-13 nucleotides by the viral protein PA. Plays a role in the initiation of the viral genome replication and modulates the activity of the ribonucleoprotein (RNP) complex. In addition, participates in the inhibition of type I interferon induction through interaction with and inhibition of the host mitochondrial antiviral signaling protein MAVS.</text>
</comment>
<comment type="subunit">
    <text evidence="1">Influenza RNA polymerase is composed of three subunits: PB1, PB2 and PA. Interacts (via N-terminus) with PB1 (via C-terminus). Interacts with nucleoprotein NP (via N-terminus). Interacts (via N-terminus) with host MAVS (via N-terminus); this interaction inhibits host innate immune response.</text>
</comment>
<comment type="subcellular location">
    <subcellularLocation>
        <location evidence="1">Virion</location>
    </subcellularLocation>
    <subcellularLocation>
        <location evidence="1">Host nucleus</location>
    </subcellularLocation>
    <subcellularLocation>
        <location evidence="1">Host mitochondrion</location>
    </subcellularLocation>
</comment>
<comment type="similarity">
    <text evidence="1">Belongs to the influenza viruses PB2 family.</text>
</comment>
<proteinExistence type="inferred from homology"/>
<accession>Q289L7</accession>
<reference key="1">
    <citation type="submission" date="2006-03" db="EMBL/GenBank/DDBJ databases">
        <title>The NIAID influenza genome sequencing project.</title>
        <authorList>
            <person name="Ghedin E."/>
            <person name="Spiro D."/>
            <person name="Sengamalay N."/>
            <person name="Zaborsky J."/>
            <person name="Feldblyum T."/>
            <person name="Subbu V."/>
            <person name="Sparenborg J."/>
            <person name="Groveman L."/>
            <person name="Halpin R."/>
            <person name="Shumway M."/>
            <person name="Sitz J."/>
            <person name="Katzel D."/>
            <person name="Koo H."/>
            <person name="Salzberg S.L."/>
            <person name="Jennings L."/>
            <person name="Smit M."/>
            <person name="Wells V."/>
            <person name="Bao Y."/>
            <person name="Bolotov P."/>
            <person name="Dernovoy D."/>
            <person name="Kiryutin B."/>
            <person name="Lipman D.J."/>
            <person name="Tatusova T."/>
        </authorList>
    </citation>
    <scope>NUCLEOTIDE SEQUENCE [GENOMIC RNA]</scope>
</reference>
<reference key="2">
    <citation type="submission" date="2006-03" db="EMBL/GenBank/DDBJ databases">
        <authorList>
            <consortium name="The NIAID Influenza Genome Sequencing Consortium"/>
        </authorList>
    </citation>
    <scope>NUCLEOTIDE SEQUENCE [GENOMIC RNA]</scope>
</reference>
<organismHost>
    <name type="scientific">Aves</name>
    <dbReference type="NCBI Taxonomy" id="8782"/>
</organismHost>
<organismHost>
    <name type="scientific">Homo sapiens</name>
    <name type="common">Human</name>
    <dbReference type="NCBI Taxonomy" id="9606"/>
</organismHost>
<organismHost>
    <name type="scientific">Sus scrofa</name>
    <name type="common">Pig</name>
    <dbReference type="NCBI Taxonomy" id="9823"/>
</organismHost>
<sequence length="759" mass="85863">MERIKELRNLMSQSRTREILTKTTVDHMAIIKKYTSGRQEKNPSLRMKWMMAMKYPITADKRITEMIPERNEQGQTLWSKVNDAGSDRVMISPLAVTWWNRNGPVASTIHYPKIYKTYFEKVERLKHGTFGPVHFRNQVKIRRRVDINPGHADLSAKEAQDVIMEVVFPNEVGARILTSESQLTITKEKKEELQNCKISPLMVAYMLERELVRKTRFLPVAGGTSSVYIEVLHLTQGTCWEQMYTPGGEVKNDDVDQSLIIAARNIVRRAAVSADPLASLLEMCHSTQIGGTRMVDILRQNPTEEQAVDICKAAMGLRISSSFSFGGFTFKRTSGSSVKREEEVLTGNLQTLKLTVHEGYEEFTMVGKRATAILRKATRRLIQLIVSGRDEQSIVEAIVVAMVFSQEDCMIKAVRGDLNFVNRANQRLNPMHQLLRHFQKDAKVLFLNWGIEPIDNVMGMIGILPGMTPSTEMSMRGVRVSKMGVDEYSNAERVVVSIDRFLRVRDQRGNVLLSPEEVSETQGTEKLTITYSSSMMWEINGPESVLINTYQWIIRNWETVKIQWSQNPTMLYNKMEFEPFQSLVPKAIRGQYSGFVRTLFQQMRDVLGTFDTTQIIKLLPFAAAPPKQSRMQFSSLTVNVRGSGMRILVRGNSPVFNYNKTTKRLTVLGKDAGTLTEDPDEGTAGVESAVLRGFLILGKEDRRYGPALSINELSNLAKGEKANVLIGQGDVVLVMKRKRDSSILTDSQTATKRIRMAIN</sequence>
<keyword id="KW-1157">Cap snatching</keyword>
<keyword id="KW-1262">Eukaryotic host gene expression shutoff by virus</keyword>
<keyword id="KW-1191">Eukaryotic host transcription shutoff by virus</keyword>
<keyword id="KW-1190">Host gene expression shutoff by virus</keyword>
<keyword id="KW-1045">Host mitochondrion</keyword>
<keyword id="KW-1048">Host nucleus</keyword>
<keyword id="KW-0945">Host-virus interaction</keyword>
<keyword id="KW-1090">Inhibition of host innate immune response by virus</keyword>
<keyword id="KW-1097">Inhibition of host MAVS by virus</keyword>
<keyword id="KW-1113">Inhibition of host RLR pathway by virus</keyword>
<keyword id="KW-1104">Inhibition of host RNA polymerase II by virus</keyword>
<keyword id="KW-0506">mRNA capping</keyword>
<keyword id="KW-0507">mRNA processing</keyword>
<keyword id="KW-0899">Viral immunoevasion</keyword>
<keyword id="KW-1195">Viral transcription</keyword>
<keyword id="KW-0946">Virion</keyword>
<protein>
    <recommendedName>
        <fullName evidence="1">Polymerase basic protein 2</fullName>
    </recommendedName>
    <alternativeName>
        <fullName evidence="1">RNA-directed RNA polymerase subunit P3</fullName>
    </alternativeName>
</protein>
<name>PB2_I00A1</name>
<gene>
    <name evidence="1" type="primary">PB2</name>
</gene>
<feature type="chain" id="PRO_0000373027" description="Polymerase basic protein 2">
    <location>
        <begin position="1"/>
        <end position="759"/>
    </location>
</feature>
<feature type="short sequence motif" description="Nuclear localization signal" evidence="1">
    <location>
        <begin position="736"/>
        <end position="739"/>
    </location>
</feature>
<feature type="site" description="Mammalian adaptation" evidence="1">
    <location>
        <position position="627"/>
    </location>
</feature>
<organism>
    <name type="scientific">Influenza A virus (strain A/New Zealand:South Canterbury/35/2000 H1N1)</name>
    <dbReference type="NCBI Taxonomy" id="363066"/>
    <lineage>
        <taxon>Viruses</taxon>
        <taxon>Riboviria</taxon>
        <taxon>Orthornavirae</taxon>
        <taxon>Negarnaviricota</taxon>
        <taxon>Polyploviricotina</taxon>
        <taxon>Insthoviricetes</taxon>
        <taxon>Articulavirales</taxon>
        <taxon>Orthomyxoviridae</taxon>
        <taxon>Alphainfluenzavirus</taxon>
        <taxon>Alphainfluenzavirus influenzae</taxon>
        <taxon>Influenza A virus</taxon>
    </lineage>
</organism>
<dbReference type="EMBL" id="CY009211">
    <property type="protein sequence ID" value="ABD61528.1"/>
    <property type="molecule type" value="Genomic_RNA"/>
</dbReference>
<dbReference type="SMR" id="Q289L7"/>
<dbReference type="Proteomes" id="UP001366552">
    <property type="component" value="Genome"/>
</dbReference>
<dbReference type="GO" id="GO:0033650">
    <property type="term" value="C:host cell mitochondrion"/>
    <property type="evidence" value="ECO:0007669"/>
    <property type="project" value="UniProtKB-SubCell"/>
</dbReference>
<dbReference type="GO" id="GO:0042025">
    <property type="term" value="C:host cell nucleus"/>
    <property type="evidence" value="ECO:0007669"/>
    <property type="project" value="UniProtKB-SubCell"/>
</dbReference>
<dbReference type="GO" id="GO:0044423">
    <property type="term" value="C:virion component"/>
    <property type="evidence" value="ECO:0007669"/>
    <property type="project" value="UniProtKB-UniRule"/>
</dbReference>
<dbReference type="GO" id="GO:0003723">
    <property type="term" value="F:RNA binding"/>
    <property type="evidence" value="ECO:0007669"/>
    <property type="project" value="UniProtKB-UniRule"/>
</dbReference>
<dbReference type="GO" id="GO:0003968">
    <property type="term" value="F:RNA-directed RNA polymerase activity"/>
    <property type="evidence" value="ECO:0007669"/>
    <property type="project" value="UniProtKB-UniRule"/>
</dbReference>
<dbReference type="GO" id="GO:0006370">
    <property type="term" value="P:7-methylguanosine mRNA capping"/>
    <property type="evidence" value="ECO:0007669"/>
    <property type="project" value="UniProtKB-UniRule"/>
</dbReference>
<dbReference type="GO" id="GO:0075526">
    <property type="term" value="P:cap snatching"/>
    <property type="evidence" value="ECO:0007669"/>
    <property type="project" value="UniProtKB-UniRule"/>
</dbReference>
<dbReference type="GO" id="GO:0006351">
    <property type="term" value="P:DNA-templated transcription"/>
    <property type="evidence" value="ECO:0007669"/>
    <property type="project" value="UniProtKB-UniRule"/>
</dbReference>
<dbReference type="GO" id="GO:0039545">
    <property type="term" value="P:symbiont-mediated suppression of host cytoplasmic pattern recognition receptor signaling pathway via inhibition of MAVS activity"/>
    <property type="evidence" value="ECO:0007669"/>
    <property type="project" value="UniProtKB-UniRule"/>
</dbReference>
<dbReference type="GO" id="GO:0039657">
    <property type="term" value="P:symbiont-mediated suppression of host gene expression"/>
    <property type="evidence" value="ECO:0007669"/>
    <property type="project" value="UniProtKB-KW"/>
</dbReference>
<dbReference type="GO" id="GO:0039523">
    <property type="term" value="P:symbiont-mediated suppression of host mRNA transcription via inhibition of RNA polymerase II activity"/>
    <property type="evidence" value="ECO:0007669"/>
    <property type="project" value="UniProtKB-UniRule"/>
</dbReference>
<dbReference type="GO" id="GO:0039694">
    <property type="term" value="P:viral RNA genome replication"/>
    <property type="evidence" value="ECO:0007669"/>
    <property type="project" value="InterPro"/>
</dbReference>
<dbReference type="FunFam" id="3.30.30.90:FF:000001">
    <property type="entry name" value="Polymerase basic protein 2"/>
    <property type="match status" value="1"/>
</dbReference>
<dbReference type="Gene3D" id="3.30.30.90">
    <property type="entry name" value="Polymerase Basic Protein 2, C-terminal domain"/>
    <property type="match status" value="1"/>
</dbReference>
<dbReference type="HAMAP" id="MF_04062">
    <property type="entry name" value="INV_PB2"/>
    <property type="match status" value="1"/>
</dbReference>
<dbReference type="InterPro" id="IPR049110">
    <property type="entry name" value="Flu_PB2_2nd"/>
</dbReference>
<dbReference type="InterPro" id="IPR049114">
    <property type="entry name" value="Flu_PB2_6th"/>
</dbReference>
<dbReference type="InterPro" id="IPR049115">
    <property type="entry name" value="Flu_PB2_C"/>
</dbReference>
<dbReference type="InterPro" id="IPR048298">
    <property type="entry name" value="Flu_PB2_CAP-bd"/>
</dbReference>
<dbReference type="InterPro" id="IPR049111">
    <property type="entry name" value="Flu_PB2_middle"/>
</dbReference>
<dbReference type="InterPro" id="IPR049106">
    <property type="entry name" value="Flu_PB2_N"/>
</dbReference>
<dbReference type="InterPro" id="IPR001591">
    <property type="entry name" value="INV_PB2"/>
</dbReference>
<dbReference type="InterPro" id="IPR049113">
    <property type="entry name" value="PB2_helical"/>
</dbReference>
<dbReference type="InterPro" id="IPR037258">
    <property type="entry name" value="PDB2_C"/>
</dbReference>
<dbReference type="Pfam" id="PF20947">
    <property type="entry name" value="Flu_PB2_1st"/>
    <property type="match status" value="1"/>
</dbReference>
<dbReference type="Pfam" id="PF20948">
    <property type="entry name" value="Flu_PB2_2nd"/>
    <property type="match status" value="1"/>
</dbReference>
<dbReference type="Pfam" id="PF20949">
    <property type="entry name" value="Flu_PB2_3rd"/>
    <property type="match status" value="1"/>
</dbReference>
<dbReference type="Pfam" id="PF20950">
    <property type="entry name" value="Flu_PB2_4th"/>
    <property type="match status" value="1"/>
</dbReference>
<dbReference type="Pfam" id="PF00604">
    <property type="entry name" value="Flu_PB2_5th"/>
    <property type="match status" value="1"/>
</dbReference>
<dbReference type="Pfam" id="PF20951">
    <property type="entry name" value="Flu_PB2_6th"/>
    <property type="match status" value="1"/>
</dbReference>
<dbReference type="Pfam" id="PF20952">
    <property type="entry name" value="Flu_PB2_7th"/>
    <property type="match status" value="1"/>
</dbReference>
<dbReference type="SUPFAM" id="SSF160453">
    <property type="entry name" value="PB2 C-terminal domain-like"/>
    <property type="match status" value="1"/>
</dbReference>